<evidence type="ECO:0000255" key="1">
    <source>
        <dbReference type="HAMAP-Rule" id="MF_01021"/>
    </source>
</evidence>
<proteinExistence type="inferred from homology"/>
<comment type="function">
    <text evidence="1">Catalyzes the hydrolysis of the adenine ring of phosphoribosyl-AMP.</text>
</comment>
<comment type="catalytic activity">
    <reaction evidence="1">
        <text>1-(5-phospho-beta-D-ribosyl)-5'-AMP + H2O = 1-(5-phospho-beta-D-ribosyl)-5-[(5-phospho-beta-D-ribosylamino)methylideneamino]imidazole-4-carboxamide</text>
        <dbReference type="Rhea" id="RHEA:20049"/>
        <dbReference type="ChEBI" id="CHEBI:15377"/>
        <dbReference type="ChEBI" id="CHEBI:58435"/>
        <dbReference type="ChEBI" id="CHEBI:59457"/>
        <dbReference type="EC" id="3.5.4.19"/>
    </reaction>
</comment>
<comment type="cofactor">
    <cofactor evidence="1">
        <name>Mg(2+)</name>
        <dbReference type="ChEBI" id="CHEBI:18420"/>
    </cofactor>
    <text evidence="1">Binds 1 Mg(2+) ion per subunit.</text>
</comment>
<comment type="cofactor">
    <cofactor evidence="1">
        <name>Zn(2+)</name>
        <dbReference type="ChEBI" id="CHEBI:29105"/>
    </cofactor>
    <text evidence="1">Binds 1 zinc ion per subunit.</text>
</comment>
<comment type="pathway">
    <text evidence="1">Amino-acid biosynthesis; L-histidine biosynthesis; L-histidine from 5-phospho-alpha-D-ribose 1-diphosphate: step 3/9.</text>
</comment>
<comment type="subunit">
    <text evidence="1">Homodimer.</text>
</comment>
<comment type="subcellular location">
    <subcellularLocation>
        <location evidence="1">Cytoplasm</location>
    </subcellularLocation>
</comment>
<comment type="similarity">
    <text evidence="1">Belongs to the PRA-CH family.</text>
</comment>
<reference key="1">
    <citation type="journal article" date="2008" name="PLoS Genet.">
        <title>Complete genome sequence of the complex carbohydrate-degrading marine bacterium, Saccharophagus degradans strain 2-40 T.</title>
        <authorList>
            <person name="Weiner R.M."/>
            <person name="Taylor L.E. II"/>
            <person name="Henrissat B."/>
            <person name="Hauser L."/>
            <person name="Land M."/>
            <person name="Coutinho P.M."/>
            <person name="Rancurel C."/>
            <person name="Saunders E.H."/>
            <person name="Longmire A.G."/>
            <person name="Zhang H."/>
            <person name="Bayer E.A."/>
            <person name="Gilbert H.J."/>
            <person name="Larimer F."/>
            <person name="Zhulin I.B."/>
            <person name="Ekborg N.A."/>
            <person name="Lamed R."/>
            <person name="Richardson P.M."/>
            <person name="Borovok I."/>
            <person name="Hutcheson S."/>
        </authorList>
    </citation>
    <scope>NUCLEOTIDE SEQUENCE [LARGE SCALE GENOMIC DNA]</scope>
    <source>
        <strain>2-40 / ATCC 43961 / DSM 17024</strain>
    </source>
</reference>
<organism>
    <name type="scientific">Saccharophagus degradans (strain 2-40 / ATCC 43961 / DSM 17024)</name>
    <dbReference type="NCBI Taxonomy" id="203122"/>
    <lineage>
        <taxon>Bacteria</taxon>
        <taxon>Pseudomonadati</taxon>
        <taxon>Pseudomonadota</taxon>
        <taxon>Gammaproteobacteria</taxon>
        <taxon>Cellvibrionales</taxon>
        <taxon>Cellvibrionaceae</taxon>
        <taxon>Saccharophagus</taxon>
    </lineage>
</organism>
<dbReference type="EC" id="3.5.4.19" evidence="1"/>
<dbReference type="EMBL" id="CP000282">
    <property type="protein sequence ID" value="ABD82479.1"/>
    <property type="molecule type" value="Genomic_DNA"/>
</dbReference>
<dbReference type="RefSeq" id="WP_011469695.1">
    <property type="nucleotide sequence ID" value="NC_007912.1"/>
</dbReference>
<dbReference type="SMR" id="Q21FQ0"/>
<dbReference type="STRING" id="203122.Sde_3222"/>
<dbReference type="GeneID" id="98614847"/>
<dbReference type="KEGG" id="sde:Sde_3222"/>
<dbReference type="eggNOG" id="COG0139">
    <property type="taxonomic scope" value="Bacteria"/>
</dbReference>
<dbReference type="HOGENOM" id="CLU_048577_5_0_6"/>
<dbReference type="OrthoDB" id="9795769at2"/>
<dbReference type="UniPathway" id="UPA00031">
    <property type="reaction ID" value="UER00008"/>
</dbReference>
<dbReference type="Proteomes" id="UP000001947">
    <property type="component" value="Chromosome"/>
</dbReference>
<dbReference type="GO" id="GO:0005737">
    <property type="term" value="C:cytoplasm"/>
    <property type="evidence" value="ECO:0007669"/>
    <property type="project" value="UniProtKB-SubCell"/>
</dbReference>
<dbReference type="GO" id="GO:0000287">
    <property type="term" value="F:magnesium ion binding"/>
    <property type="evidence" value="ECO:0007669"/>
    <property type="project" value="UniProtKB-UniRule"/>
</dbReference>
<dbReference type="GO" id="GO:0004635">
    <property type="term" value="F:phosphoribosyl-AMP cyclohydrolase activity"/>
    <property type="evidence" value="ECO:0007669"/>
    <property type="project" value="UniProtKB-UniRule"/>
</dbReference>
<dbReference type="GO" id="GO:0008270">
    <property type="term" value="F:zinc ion binding"/>
    <property type="evidence" value="ECO:0007669"/>
    <property type="project" value="UniProtKB-UniRule"/>
</dbReference>
<dbReference type="GO" id="GO:0000105">
    <property type="term" value="P:L-histidine biosynthetic process"/>
    <property type="evidence" value="ECO:0007669"/>
    <property type="project" value="UniProtKB-UniRule"/>
</dbReference>
<dbReference type="FunFam" id="3.10.20.810:FF:000001">
    <property type="entry name" value="Histidine biosynthesis bifunctional protein HisIE"/>
    <property type="match status" value="1"/>
</dbReference>
<dbReference type="Gene3D" id="3.10.20.810">
    <property type="entry name" value="Phosphoribosyl-AMP cyclohydrolase"/>
    <property type="match status" value="1"/>
</dbReference>
<dbReference type="HAMAP" id="MF_01021">
    <property type="entry name" value="HisI"/>
    <property type="match status" value="1"/>
</dbReference>
<dbReference type="InterPro" id="IPR026660">
    <property type="entry name" value="PRA-CH"/>
</dbReference>
<dbReference type="InterPro" id="IPR002496">
    <property type="entry name" value="PRib_AMP_CycHydrolase_dom"/>
</dbReference>
<dbReference type="InterPro" id="IPR038019">
    <property type="entry name" value="PRib_AMP_CycHydrolase_sf"/>
</dbReference>
<dbReference type="NCBIfam" id="NF000768">
    <property type="entry name" value="PRK00051.1"/>
    <property type="match status" value="1"/>
</dbReference>
<dbReference type="PANTHER" id="PTHR42945">
    <property type="entry name" value="HISTIDINE BIOSYNTHESIS BIFUNCTIONAL PROTEIN"/>
    <property type="match status" value="1"/>
</dbReference>
<dbReference type="PANTHER" id="PTHR42945:SF1">
    <property type="entry name" value="HISTIDINE BIOSYNTHESIS BIFUNCTIONAL PROTEIN HIS7"/>
    <property type="match status" value="1"/>
</dbReference>
<dbReference type="Pfam" id="PF01502">
    <property type="entry name" value="PRA-CH"/>
    <property type="match status" value="1"/>
</dbReference>
<dbReference type="SUPFAM" id="SSF141734">
    <property type="entry name" value="HisI-like"/>
    <property type="match status" value="1"/>
</dbReference>
<sequence>MTDSTFLDEITWTSDGLVPAIARDAKTGTVLMMAWMNRESLSLTAQENIAVYWSRSRGKLWRKGETSGFTQHVKSIRLDCDADVIVLDVEQMGGIACHTGRESCFYRELQNGKWVATDPVLKDPKEIY</sequence>
<gene>
    <name evidence="1" type="primary">hisI</name>
    <name type="ordered locus">Sde_3222</name>
</gene>
<protein>
    <recommendedName>
        <fullName evidence="1">Phosphoribosyl-AMP cyclohydrolase</fullName>
        <shortName evidence="1">PRA-CH</shortName>
        <ecNumber evidence="1">3.5.4.19</ecNumber>
    </recommendedName>
</protein>
<accession>Q21FQ0</accession>
<name>HIS3_SACD2</name>
<feature type="chain" id="PRO_0000319716" description="Phosphoribosyl-AMP cyclohydrolase">
    <location>
        <begin position="1"/>
        <end position="128"/>
    </location>
</feature>
<feature type="binding site" evidence="1">
    <location>
        <position position="79"/>
    </location>
    <ligand>
        <name>Mg(2+)</name>
        <dbReference type="ChEBI" id="CHEBI:18420"/>
    </ligand>
</feature>
<feature type="binding site" evidence="1">
    <location>
        <position position="80"/>
    </location>
    <ligand>
        <name>Zn(2+)</name>
        <dbReference type="ChEBI" id="CHEBI:29105"/>
        <note>ligand shared between dimeric partners</note>
    </ligand>
</feature>
<feature type="binding site" evidence="1">
    <location>
        <position position="81"/>
    </location>
    <ligand>
        <name>Mg(2+)</name>
        <dbReference type="ChEBI" id="CHEBI:18420"/>
    </ligand>
</feature>
<feature type="binding site" evidence="1">
    <location>
        <position position="83"/>
    </location>
    <ligand>
        <name>Mg(2+)</name>
        <dbReference type="ChEBI" id="CHEBI:18420"/>
    </ligand>
</feature>
<feature type="binding site" evidence="1">
    <location>
        <position position="97"/>
    </location>
    <ligand>
        <name>Zn(2+)</name>
        <dbReference type="ChEBI" id="CHEBI:29105"/>
        <note>ligand shared between dimeric partners</note>
    </ligand>
</feature>
<feature type="binding site" evidence="1">
    <location>
        <position position="104"/>
    </location>
    <ligand>
        <name>Zn(2+)</name>
        <dbReference type="ChEBI" id="CHEBI:29105"/>
        <note>ligand shared between dimeric partners</note>
    </ligand>
</feature>
<keyword id="KW-0028">Amino-acid biosynthesis</keyword>
<keyword id="KW-0963">Cytoplasm</keyword>
<keyword id="KW-0368">Histidine biosynthesis</keyword>
<keyword id="KW-0378">Hydrolase</keyword>
<keyword id="KW-0460">Magnesium</keyword>
<keyword id="KW-0479">Metal-binding</keyword>
<keyword id="KW-1185">Reference proteome</keyword>
<keyword id="KW-0862">Zinc</keyword>